<dbReference type="EC" id="1.6.5.-" evidence="1"/>
<dbReference type="EC" id="1.7.1.17" evidence="1"/>
<dbReference type="EMBL" id="CP000249">
    <property type="protein sequence ID" value="ABD10013.1"/>
    <property type="molecule type" value="Genomic_DNA"/>
</dbReference>
<dbReference type="RefSeq" id="WP_011435082.1">
    <property type="nucleotide sequence ID" value="NZ_MSEA01000043.1"/>
</dbReference>
<dbReference type="SMR" id="Q2JFC9"/>
<dbReference type="STRING" id="106370.Francci3_0629"/>
<dbReference type="KEGG" id="fra:Francci3_0629"/>
<dbReference type="eggNOG" id="COG1182">
    <property type="taxonomic scope" value="Bacteria"/>
</dbReference>
<dbReference type="HOGENOM" id="CLU_088964_0_1_11"/>
<dbReference type="OrthoDB" id="9805013at2"/>
<dbReference type="PhylomeDB" id="Q2JFC9"/>
<dbReference type="Proteomes" id="UP000001937">
    <property type="component" value="Chromosome"/>
</dbReference>
<dbReference type="GO" id="GO:0009055">
    <property type="term" value="F:electron transfer activity"/>
    <property type="evidence" value="ECO:0007669"/>
    <property type="project" value="UniProtKB-UniRule"/>
</dbReference>
<dbReference type="GO" id="GO:0010181">
    <property type="term" value="F:FMN binding"/>
    <property type="evidence" value="ECO:0007669"/>
    <property type="project" value="UniProtKB-UniRule"/>
</dbReference>
<dbReference type="GO" id="GO:0016652">
    <property type="term" value="F:oxidoreductase activity, acting on NAD(P)H as acceptor"/>
    <property type="evidence" value="ECO:0007669"/>
    <property type="project" value="UniProtKB-UniRule"/>
</dbReference>
<dbReference type="GO" id="GO:0016655">
    <property type="term" value="F:oxidoreductase activity, acting on NAD(P)H, quinone or similar compound as acceptor"/>
    <property type="evidence" value="ECO:0007669"/>
    <property type="project" value="InterPro"/>
</dbReference>
<dbReference type="Gene3D" id="3.40.50.360">
    <property type="match status" value="1"/>
</dbReference>
<dbReference type="HAMAP" id="MF_01216">
    <property type="entry name" value="Azoreductase_type1"/>
    <property type="match status" value="1"/>
</dbReference>
<dbReference type="InterPro" id="IPR003680">
    <property type="entry name" value="Flavodoxin_fold"/>
</dbReference>
<dbReference type="InterPro" id="IPR029039">
    <property type="entry name" value="Flavoprotein-like_sf"/>
</dbReference>
<dbReference type="InterPro" id="IPR050104">
    <property type="entry name" value="FMN-dep_NADH:Q_OxRdtase_AzoR1"/>
</dbReference>
<dbReference type="InterPro" id="IPR023048">
    <property type="entry name" value="NADH:quinone_OxRdtase_FMN_depd"/>
</dbReference>
<dbReference type="PANTHER" id="PTHR43741">
    <property type="entry name" value="FMN-DEPENDENT NADH-AZOREDUCTASE 1"/>
    <property type="match status" value="1"/>
</dbReference>
<dbReference type="PANTHER" id="PTHR43741:SF4">
    <property type="entry name" value="FMN-DEPENDENT NADH:QUINONE OXIDOREDUCTASE"/>
    <property type="match status" value="1"/>
</dbReference>
<dbReference type="Pfam" id="PF02525">
    <property type="entry name" value="Flavodoxin_2"/>
    <property type="match status" value="1"/>
</dbReference>
<dbReference type="SUPFAM" id="SSF52218">
    <property type="entry name" value="Flavoproteins"/>
    <property type="match status" value="1"/>
</dbReference>
<comment type="function">
    <text evidence="1">Quinone reductase that provides resistance to thiol-specific stress caused by electrophilic quinones.</text>
</comment>
<comment type="function">
    <text evidence="1">Also exhibits azoreductase activity. Catalyzes the reductive cleavage of the azo bond in aromatic azo compounds to the corresponding amines.</text>
</comment>
<comment type="catalytic activity">
    <reaction evidence="1">
        <text>2 a quinone + NADH + H(+) = 2 a 1,4-benzosemiquinone + NAD(+)</text>
        <dbReference type="Rhea" id="RHEA:65952"/>
        <dbReference type="ChEBI" id="CHEBI:15378"/>
        <dbReference type="ChEBI" id="CHEBI:57540"/>
        <dbReference type="ChEBI" id="CHEBI:57945"/>
        <dbReference type="ChEBI" id="CHEBI:132124"/>
        <dbReference type="ChEBI" id="CHEBI:134225"/>
    </reaction>
</comment>
<comment type="catalytic activity">
    <reaction evidence="1">
        <text>N,N-dimethyl-1,4-phenylenediamine + anthranilate + 2 NAD(+) = 2-(4-dimethylaminophenyl)diazenylbenzoate + 2 NADH + 2 H(+)</text>
        <dbReference type="Rhea" id="RHEA:55872"/>
        <dbReference type="ChEBI" id="CHEBI:15378"/>
        <dbReference type="ChEBI" id="CHEBI:15783"/>
        <dbReference type="ChEBI" id="CHEBI:16567"/>
        <dbReference type="ChEBI" id="CHEBI:57540"/>
        <dbReference type="ChEBI" id="CHEBI:57945"/>
        <dbReference type="ChEBI" id="CHEBI:71579"/>
        <dbReference type="EC" id="1.7.1.17"/>
    </reaction>
</comment>
<comment type="cofactor">
    <cofactor evidence="1">
        <name>FMN</name>
        <dbReference type="ChEBI" id="CHEBI:58210"/>
    </cofactor>
    <text evidence="1">Binds 1 FMN per subunit.</text>
</comment>
<comment type="subunit">
    <text evidence="1">Homodimer.</text>
</comment>
<comment type="similarity">
    <text evidence="1">Belongs to the azoreductase type 1 family.</text>
</comment>
<keyword id="KW-0285">Flavoprotein</keyword>
<keyword id="KW-0288">FMN</keyword>
<keyword id="KW-0520">NAD</keyword>
<keyword id="KW-0560">Oxidoreductase</keyword>
<keyword id="KW-1185">Reference proteome</keyword>
<proteinExistence type="inferred from homology"/>
<name>AZOR_FRACC</name>
<organism>
    <name type="scientific">Frankia casuarinae (strain DSM 45818 / CECT 9043 / HFP020203 / CcI3)</name>
    <dbReference type="NCBI Taxonomy" id="106370"/>
    <lineage>
        <taxon>Bacteria</taxon>
        <taxon>Bacillati</taxon>
        <taxon>Actinomycetota</taxon>
        <taxon>Actinomycetes</taxon>
        <taxon>Frankiales</taxon>
        <taxon>Frankiaceae</taxon>
        <taxon>Frankia</taxon>
    </lineage>
</organism>
<protein>
    <recommendedName>
        <fullName evidence="1">FMN-dependent NADH:quinone oxidoreductase</fullName>
        <ecNumber evidence="1">1.6.5.-</ecNumber>
    </recommendedName>
    <alternativeName>
        <fullName evidence="1">Azo-dye reductase</fullName>
    </alternativeName>
    <alternativeName>
        <fullName evidence="1">FMN-dependent NADH-azo compound oxidoreductase</fullName>
    </alternativeName>
    <alternativeName>
        <fullName evidence="1">FMN-dependent NADH-azoreductase</fullName>
        <ecNumber evidence="1">1.7.1.17</ecNumber>
    </alternativeName>
</protein>
<evidence type="ECO:0000255" key="1">
    <source>
        <dbReference type="HAMAP-Rule" id="MF_01216"/>
    </source>
</evidence>
<gene>
    <name evidence="1" type="primary">azoR</name>
    <name type="ordered locus">Francci3_0629</name>
</gene>
<reference key="1">
    <citation type="journal article" date="2007" name="Genome Res.">
        <title>Genome characteristics of facultatively symbiotic Frankia sp. strains reflect host range and host plant biogeography.</title>
        <authorList>
            <person name="Normand P."/>
            <person name="Lapierre P."/>
            <person name="Tisa L.S."/>
            <person name="Gogarten J.P."/>
            <person name="Alloisio N."/>
            <person name="Bagnarol E."/>
            <person name="Bassi C.A."/>
            <person name="Berry A.M."/>
            <person name="Bickhart D.M."/>
            <person name="Choisne N."/>
            <person name="Couloux A."/>
            <person name="Cournoyer B."/>
            <person name="Cruveiller S."/>
            <person name="Daubin V."/>
            <person name="Demange N."/>
            <person name="Francino M.P."/>
            <person name="Goltsman E."/>
            <person name="Huang Y."/>
            <person name="Kopp O.R."/>
            <person name="Labarre L."/>
            <person name="Lapidus A."/>
            <person name="Lavire C."/>
            <person name="Marechal J."/>
            <person name="Martinez M."/>
            <person name="Mastronunzio J.E."/>
            <person name="Mullin B.C."/>
            <person name="Niemann J."/>
            <person name="Pujic P."/>
            <person name="Rawnsley T."/>
            <person name="Rouy Z."/>
            <person name="Schenowitz C."/>
            <person name="Sellstedt A."/>
            <person name="Tavares F."/>
            <person name="Tomkins J.P."/>
            <person name="Vallenet D."/>
            <person name="Valverde C."/>
            <person name="Wall L.G."/>
            <person name="Wang Y."/>
            <person name="Medigue C."/>
            <person name="Benson D.R."/>
        </authorList>
    </citation>
    <scope>NUCLEOTIDE SEQUENCE [LARGE SCALE GENOMIC DNA]</scope>
    <source>
        <strain>DSM 45818 / CECT 9043 / HFP020203 / CcI3</strain>
    </source>
</reference>
<feature type="chain" id="PRO_0000245917" description="FMN-dependent NADH:quinone oxidoreductase">
    <location>
        <begin position="1"/>
        <end position="211"/>
    </location>
</feature>
<feature type="binding site" evidence="1">
    <location>
        <position position="10"/>
    </location>
    <ligand>
        <name>FMN</name>
        <dbReference type="ChEBI" id="CHEBI:58210"/>
    </ligand>
</feature>
<feature type="binding site" evidence="1">
    <location>
        <begin position="16"/>
        <end position="18"/>
    </location>
    <ligand>
        <name>FMN</name>
        <dbReference type="ChEBI" id="CHEBI:58210"/>
    </ligand>
</feature>
<sequence length="211" mass="22896">MPHLLHVDSSLATESSTSRSIATIFAEAWREAHPDGIITYRDLSVTPPPHLDWATVSARFTPPEQLSAEQAEAVKKGEELIAEVEAADEYLLSVPMYNYAVPSTFKAWIDQIIVMGRTVRQAPDDSALTGKKVTVVTAQGGSYGPGTPKEGWDHQQPYVAHILAALGATDIEFIRVEMTLAPVNPALAEFIDLFQRSKAEAAAAARLRASV</sequence>
<accession>Q2JFC9</accession>